<feature type="chain" id="PRO_0000441887" description="Glycerol-3-phosphate acyltransferase 9">
    <location>
        <begin position="1"/>
        <end position="376"/>
    </location>
</feature>
<feature type="topological domain" description="Cytoplasmic" evidence="10">
    <location>
        <begin position="1"/>
        <end position="78"/>
    </location>
</feature>
<feature type="transmembrane region" description="Helical" evidence="3">
    <location>
        <begin position="79"/>
        <end position="99"/>
    </location>
</feature>
<feature type="transmembrane region" description="Helical" evidence="3">
    <location>
        <begin position="102"/>
        <end position="122"/>
    </location>
</feature>
<feature type="transmembrane region" description="Helical" evidence="3">
    <location>
        <begin position="135"/>
        <end position="155"/>
    </location>
</feature>
<feature type="topological domain" description="Cytoplasmic" evidence="10">
    <location>
        <begin position="156"/>
        <end position="376"/>
    </location>
</feature>
<feature type="region of interest" description="Catalytic" evidence="9">
    <location>
        <begin position="168"/>
        <end position="180"/>
    </location>
</feature>
<feature type="region of interest" description="Glycerol-3-phosphate binding" evidence="9">
    <location>
        <begin position="242"/>
        <end position="262"/>
    </location>
</feature>
<feature type="region of interest" description="Catalytic" evidence="9">
    <location>
        <begin position="266"/>
        <end position="275"/>
    </location>
</feature>
<feature type="region of interest" description="Endoplasmic reticulum targeting" evidence="4">
    <location>
        <begin position="369"/>
        <end position="373"/>
    </location>
</feature>
<feature type="short sequence motif" description="HXXXXD motif" evidence="1">
    <location>
        <begin position="171"/>
        <end position="176"/>
    </location>
</feature>
<feature type="binding site" evidence="9">
    <location>
        <begin position="209"/>
        <end position="218"/>
    </location>
    <ligand>
        <name>sn-glycerol 3-phosphate</name>
        <dbReference type="ChEBI" id="CHEBI:57597"/>
    </ligand>
</feature>
<feature type="modified residue" description="Phosphoserine" evidence="13">
    <location>
        <position position="13"/>
    </location>
</feature>
<feature type="mutagenesis site" description="Abnormal subcellular localization at the plasma membrane." evidence="4">
    <original>ILARL</original>
    <variation>AAAAA</variation>
    <location>
        <begin position="369"/>
        <end position="373"/>
    </location>
</feature>
<accession>Q8GWG0</accession>
<accession>Q9FF57</accession>
<gene>
    <name evidence="7" type="primary">GPAT9</name>
    <name evidence="11" type="ordered locus">At5g60620</name>
    <name evidence="12" type="ORF">MUP24.4</name>
</gene>
<proteinExistence type="evidence at protein level"/>
<reference key="1">
    <citation type="journal article" date="2009" name="Plant Physiol. Biochem.">
        <title>Arabidopsis thaliana GPAT8 and GPAT9 are localized to the ER and possess distinct ER retrieval signals: functional divergence of the dilysine ER retrieval motif in plant cells.</title>
        <authorList>
            <person name="Gidda S.K."/>
            <person name="Shockey J.M."/>
            <person name="Rothstein S.J."/>
            <person name="Dyer J.M."/>
            <person name="Mullen R.T."/>
        </authorList>
    </citation>
    <scope>NUCLEOTIDE SEQUENCE [MRNA]</scope>
    <scope>SUBCELLULAR LOCATION</scope>
    <scope>TISSUE SPECIFICITY</scope>
    <scope>MUTAGENESIS OF 369-ILE--LEU-373</scope>
</reference>
<reference key="2">
    <citation type="journal article" date="1997" name="DNA Res.">
        <title>Structural analysis of Arabidopsis thaliana chromosome 5. I. Sequence features of the 1.6 Mb regions covered by twenty physically assigned P1 clones.</title>
        <authorList>
            <person name="Sato S."/>
            <person name="Kotani H."/>
            <person name="Nakamura Y."/>
            <person name="Kaneko T."/>
            <person name="Asamizu E."/>
            <person name="Fukami M."/>
            <person name="Miyajima N."/>
            <person name="Tabata S."/>
        </authorList>
    </citation>
    <scope>NUCLEOTIDE SEQUENCE [LARGE SCALE GENOMIC DNA]</scope>
    <source>
        <strain>cv. Columbia</strain>
    </source>
</reference>
<reference key="3">
    <citation type="journal article" date="2017" name="Plant J.">
        <title>Araport11: a complete reannotation of the Arabidopsis thaliana reference genome.</title>
        <authorList>
            <person name="Cheng C.Y."/>
            <person name="Krishnakumar V."/>
            <person name="Chan A.P."/>
            <person name="Thibaud-Nissen F."/>
            <person name="Schobel S."/>
            <person name="Town C.D."/>
        </authorList>
    </citation>
    <scope>GENOME REANNOTATION</scope>
    <source>
        <strain>cv. Columbia</strain>
    </source>
</reference>
<reference key="4">
    <citation type="journal article" date="2002" name="Science">
        <title>Functional annotation of a full-length Arabidopsis cDNA collection.</title>
        <authorList>
            <person name="Seki M."/>
            <person name="Narusaka M."/>
            <person name="Kamiya A."/>
            <person name="Ishida J."/>
            <person name="Satou M."/>
            <person name="Sakurai T."/>
            <person name="Nakajima M."/>
            <person name="Enju A."/>
            <person name="Akiyama K."/>
            <person name="Oono Y."/>
            <person name="Muramatsu M."/>
            <person name="Hayashizaki Y."/>
            <person name="Kawai J."/>
            <person name="Carninci P."/>
            <person name="Itoh M."/>
            <person name="Ishii Y."/>
            <person name="Arakawa T."/>
            <person name="Shibata K."/>
            <person name="Shinagawa A."/>
            <person name="Shinozaki K."/>
        </authorList>
    </citation>
    <scope>NUCLEOTIDE SEQUENCE [LARGE SCALE MRNA]</scope>
    <source>
        <strain>cv. Columbia</strain>
    </source>
</reference>
<reference key="5">
    <citation type="journal article" date="2003" name="Science">
        <title>Empirical analysis of transcriptional activity in the Arabidopsis genome.</title>
        <authorList>
            <person name="Yamada K."/>
            <person name="Lim J."/>
            <person name="Dale J.M."/>
            <person name="Chen H."/>
            <person name="Shinn P."/>
            <person name="Palm C.J."/>
            <person name="Southwick A.M."/>
            <person name="Wu H.C."/>
            <person name="Kim C.J."/>
            <person name="Nguyen M."/>
            <person name="Pham P.K."/>
            <person name="Cheuk R.F."/>
            <person name="Karlin-Newmann G."/>
            <person name="Liu S.X."/>
            <person name="Lam B."/>
            <person name="Sakano H."/>
            <person name="Wu T."/>
            <person name="Yu G."/>
            <person name="Miranda M."/>
            <person name="Quach H.L."/>
            <person name="Tripp M."/>
            <person name="Chang C.H."/>
            <person name="Lee J.M."/>
            <person name="Toriumi M.J."/>
            <person name="Chan M.M."/>
            <person name="Tang C.C."/>
            <person name="Onodera C.S."/>
            <person name="Deng J.M."/>
            <person name="Akiyama K."/>
            <person name="Ansari Y."/>
            <person name="Arakawa T."/>
            <person name="Banh J."/>
            <person name="Banno F."/>
            <person name="Bowser L."/>
            <person name="Brooks S.Y."/>
            <person name="Carninci P."/>
            <person name="Chao Q."/>
            <person name="Choy N."/>
            <person name="Enju A."/>
            <person name="Goldsmith A.D."/>
            <person name="Gurjal M."/>
            <person name="Hansen N.F."/>
            <person name="Hayashizaki Y."/>
            <person name="Johnson-Hopson C."/>
            <person name="Hsuan V.W."/>
            <person name="Iida K."/>
            <person name="Karnes M."/>
            <person name="Khan S."/>
            <person name="Koesema E."/>
            <person name="Ishida J."/>
            <person name="Jiang P.X."/>
            <person name="Jones T."/>
            <person name="Kawai J."/>
            <person name="Kamiya A."/>
            <person name="Meyers C."/>
            <person name="Nakajima M."/>
            <person name="Narusaka M."/>
            <person name="Seki M."/>
            <person name="Sakurai T."/>
            <person name="Satou M."/>
            <person name="Tamse R."/>
            <person name="Vaysberg M."/>
            <person name="Wallender E.K."/>
            <person name="Wong C."/>
            <person name="Yamamura Y."/>
            <person name="Yuan S."/>
            <person name="Shinozaki K."/>
            <person name="Davis R.W."/>
            <person name="Theologis A."/>
            <person name="Ecker J.R."/>
        </authorList>
    </citation>
    <scope>NUCLEOTIDE SEQUENCE [LARGE SCALE MRNA]</scope>
    <source>
        <strain>cv. Columbia</strain>
    </source>
</reference>
<reference key="6">
    <citation type="journal article" date="2006" name="J. Lipid Res.">
        <title>Agpat6--a novel lipid biosynthetic gene required for triacylglycerol production in mammary epithelium.</title>
        <authorList>
            <person name="Beigneux A.P."/>
            <person name="Vergnes L."/>
            <person name="Qiao X."/>
            <person name="Quatela S."/>
            <person name="Davis R."/>
            <person name="Watkins S.M."/>
            <person name="Coleman R.A."/>
            <person name="Walzem R.L."/>
            <person name="Philips M."/>
            <person name="Reue K."/>
            <person name="Young S.G."/>
        </authorList>
    </citation>
    <scope>REVIEW</scope>
    <scope>GENE FAMILY</scope>
</reference>
<reference key="7">
    <citation type="journal article" date="2009" name="J. Proteomics">
        <title>Phosphoproteomic analysis of nuclei-enriched fractions from Arabidopsis thaliana.</title>
        <authorList>
            <person name="Jones A.M.E."/>
            <person name="MacLean D."/>
            <person name="Studholme D.J."/>
            <person name="Serna-Sanz A."/>
            <person name="Andreasson E."/>
            <person name="Rathjen J.P."/>
            <person name="Peck S.C."/>
        </authorList>
    </citation>
    <scope>IDENTIFICATION BY MASS SPECTROMETRY [LARGE SCALE ANALYSIS]</scope>
    <source>
        <strain>cv. Columbia</strain>
    </source>
</reference>
<reference key="8">
    <citation type="journal article" date="2009" name="Plant Physiol.">
        <title>Large-scale Arabidopsis phosphoproteome profiling reveals novel chloroplast kinase substrates and phosphorylation networks.</title>
        <authorList>
            <person name="Reiland S."/>
            <person name="Messerli G."/>
            <person name="Baerenfaller K."/>
            <person name="Gerrits B."/>
            <person name="Endler A."/>
            <person name="Grossmann J."/>
            <person name="Gruissem W."/>
            <person name="Baginsky S."/>
        </authorList>
    </citation>
    <scope>PHOSPHORYLATION [LARGE SCALE ANALYSIS] AT SER-13</scope>
    <scope>IDENTIFICATION BY MASS SPECTROMETRY [LARGE SCALE ANALYSIS]</scope>
</reference>
<reference key="9">
    <citation type="journal article" date="2016" name="J. Exp. Bot.">
        <title>Arabidopsis GPAT9 contributes to synthesis of intracellular glycerolipids but not surface lipids.</title>
        <authorList>
            <person name="Singer S.D."/>
            <person name="Chen G."/>
            <person name="Mietkiewska E."/>
            <person name="Tomasi P."/>
            <person name="Jayawardhane K."/>
            <person name="Dyer J.M."/>
            <person name="Weselake R.J."/>
        </authorList>
    </citation>
    <scope>FUNCTION</scope>
    <scope>CATALYTIC ACTIVITY</scope>
    <scope>PATHWAY</scope>
    <scope>TISSUE SPECIFICITY</scope>
    <scope>DEVELOPMENTAL STAGE</scope>
    <source>
        <strain>cv. Columbia</strain>
    </source>
</reference>
<reference key="10">
    <citation type="journal article" date="2016" name="Plant Physiol.">
        <title>Identification of Arabidopsis GPAT9 (At5g60620) as an essential gene involved in triacylglycerol biosynthesis.</title>
        <authorList>
            <person name="Shockey J."/>
            <person name="Regmi A."/>
            <person name="Cotton K."/>
            <person name="Adhikari N."/>
            <person name="Browse J."/>
            <person name="Bates P.D."/>
        </authorList>
    </citation>
    <scope>FUNCTION</scope>
    <scope>DISRUPTION PHENOTYPE</scope>
    <scope>CATALYTIC ACTIVITY</scope>
    <scope>PATHWAY</scope>
    <scope>SUBUNIT</scope>
    <scope>INTERACTION WITH LPAT2 AND LPCAT2</scope>
    <source>
        <strain>cv. Columbia</strain>
    </source>
</reference>
<keyword id="KW-0012">Acyltransferase</keyword>
<keyword id="KW-0256">Endoplasmic reticulum</keyword>
<keyword id="KW-0444">Lipid biosynthesis</keyword>
<keyword id="KW-0443">Lipid metabolism</keyword>
<keyword id="KW-0472">Membrane</keyword>
<keyword id="KW-0594">Phospholipid biosynthesis</keyword>
<keyword id="KW-1208">Phospholipid metabolism</keyword>
<keyword id="KW-0597">Phosphoprotein</keyword>
<keyword id="KW-1185">Reference proteome</keyword>
<keyword id="KW-0808">Transferase</keyword>
<keyword id="KW-0812">Transmembrane</keyword>
<keyword id="KW-1133">Transmembrane helix</keyword>
<dbReference type="EC" id="2.3.1.15" evidence="5 6"/>
<dbReference type="EMBL" id="FJ479752">
    <property type="protein sequence ID" value="ACT32031.1"/>
    <property type="molecule type" value="mRNA"/>
</dbReference>
<dbReference type="EMBL" id="AB005246">
    <property type="protein sequence ID" value="BAB09835.1"/>
    <property type="status" value="ALT_SEQ"/>
    <property type="molecule type" value="Genomic_DNA"/>
</dbReference>
<dbReference type="EMBL" id="CP002688">
    <property type="protein sequence ID" value="AED97358.1"/>
    <property type="molecule type" value="Genomic_DNA"/>
</dbReference>
<dbReference type="EMBL" id="AK118869">
    <property type="protein sequence ID" value="BAC43455.1"/>
    <property type="molecule type" value="mRNA"/>
</dbReference>
<dbReference type="EMBL" id="BT006033">
    <property type="protein sequence ID" value="AAP04020.1"/>
    <property type="molecule type" value="mRNA"/>
</dbReference>
<dbReference type="RefSeq" id="NP_568925.1">
    <property type="nucleotide sequence ID" value="NM_125455.4"/>
</dbReference>
<dbReference type="FunCoup" id="Q8GWG0">
    <property type="interactions" value="3369"/>
</dbReference>
<dbReference type="STRING" id="3702.Q8GWG0"/>
<dbReference type="iPTMnet" id="Q8GWG0"/>
<dbReference type="PaxDb" id="3702-AT5G60620.1"/>
<dbReference type="ProteomicsDB" id="248505"/>
<dbReference type="EnsemblPlants" id="AT5G60620.1">
    <property type="protein sequence ID" value="AT5G60620.1"/>
    <property type="gene ID" value="AT5G60620"/>
</dbReference>
<dbReference type="GeneID" id="836183"/>
<dbReference type="Gramene" id="AT5G60620.1">
    <property type="protein sequence ID" value="AT5G60620.1"/>
    <property type="gene ID" value="AT5G60620"/>
</dbReference>
<dbReference type="KEGG" id="ath:AT5G60620"/>
<dbReference type="Araport" id="AT5G60620"/>
<dbReference type="TAIR" id="AT5G60620">
    <property type="gene designation" value="GPAT9"/>
</dbReference>
<dbReference type="eggNOG" id="KOG2898">
    <property type="taxonomic scope" value="Eukaryota"/>
</dbReference>
<dbReference type="HOGENOM" id="CLU_031080_1_0_1"/>
<dbReference type="InParanoid" id="Q8GWG0"/>
<dbReference type="OMA" id="ANHTTVM"/>
<dbReference type="OrthoDB" id="10051137at2759"/>
<dbReference type="PhylomeDB" id="Q8GWG0"/>
<dbReference type="BioCyc" id="ARA:AT5G60620-MONOMER"/>
<dbReference type="BioCyc" id="MetaCyc:AT5G60620-MONOMER"/>
<dbReference type="BRENDA" id="2.3.1.15">
    <property type="organism ID" value="399"/>
</dbReference>
<dbReference type="UniPathway" id="UPA00282"/>
<dbReference type="PRO" id="PR:Q8GWG0"/>
<dbReference type="Proteomes" id="UP000006548">
    <property type="component" value="Chromosome 5"/>
</dbReference>
<dbReference type="ExpressionAtlas" id="Q8GWG0">
    <property type="expression patterns" value="baseline and differential"/>
</dbReference>
<dbReference type="GO" id="GO:0005783">
    <property type="term" value="C:endoplasmic reticulum"/>
    <property type="evidence" value="ECO:0000314"/>
    <property type="project" value="TAIR"/>
</dbReference>
<dbReference type="GO" id="GO:0005789">
    <property type="term" value="C:endoplasmic reticulum membrane"/>
    <property type="evidence" value="ECO:0007669"/>
    <property type="project" value="UniProtKB-SubCell"/>
</dbReference>
<dbReference type="GO" id="GO:0004366">
    <property type="term" value="F:glycerol-3-phosphate O-acyltransferase activity"/>
    <property type="evidence" value="ECO:0000314"/>
    <property type="project" value="UniProtKB"/>
</dbReference>
<dbReference type="GO" id="GO:0006651">
    <property type="term" value="P:diacylglycerol biosynthetic process"/>
    <property type="evidence" value="ECO:0000250"/>
    <property type="project" value="TAIR"/>
</dbReference>
<dbReference type="GO" id="GO:0006633">
    <property type="term" value="P:fatty acid biosynthetic process"/>
    <property type="evidence" value="ECO:0000315"/>
    <property type="project" value="UniProtKB"/>
</dbReference>
<dbReference type="GO" id="GO:0048229">
    <property type="term" value="P:gametophyte development"/>
    <property type="evidence" value="ECO:0000315"/>
    <property type="project" value="UniProtKB"/>
</dbReference>
<dbReference type="GO" id="GO:0006072">
    <property type="term" value="P:glycerol-3-phosphate metabolic process"/>
    <property type="evidence" value="ECO:0000315"/>
    <property type="project" value="UniProtKB"/>
</dbReference>
<dbReference type="GO" id="GO:0019915">
    <property type="term" value="P:lipid storage"/>
    <property type="evidence" value="ECO:0000315"/>
    <property type="project" value="UniProtKB"/>
</dbReference>
<dbReference type="GO" id="GO:0008654">
    <property type="term" value="P:phospholipid biosynthetic process"/>
    <property type="evidence" value="ECO:0007669"/>
    <property type="project" value="UniProtKB-KW"/>
</dbReference>
<dbReference type="GO" id="GO:0010152">
    <property type="term" value="P:pollen maturation"/>
    <property type="evidence" value="ECO:0000315"/>
    <property type="project" value="UniProtKB"/>
</dbReference>
<dbReference type="GO" id="GO:0010344">
    <property type="term" value="P:seed oilbody biogenesis"/>
    <property type="evidence" value="ECO:0000315"/>
    <property type="project" value="UniProtKB"/>
</dbReference>
<dbReference type="GO" id="GO:0019432">
    <property type="term" value="P:triglyceride biosynthetic process"/>
    <property type="evidence" value="ECO:0000314"/>
    <property type="project" value="UniProtKB"/>
</dbReference>
<dbReference type="CDD" id="cd07991">
    <property type="entry name" value="LPLAT_LPCAT1-like"/>
    <property type="match status" value="1"/>
</dbReference>
<dbReference type="InterPro" id="IPR045252">
    <property type="entry name" value="LPCAT1-like"/>
</dbReference>
<dbReference type="InterPro" id="IPR002123">
    <property type="entry name" value="Plipid/glycerol_acylTrfase"/>
</dbReference>
<dbReference type="PANTHER" id="PTHR23063:SF2">
    <property type="entry name" value="GLYCEROL-3-PHOSPHATE ACYLTRANSFERASE 4, ISOFORM D-RELATED"/>
    <property type="match status" value="1"/>
</dbReference>
<dbReference type="PANTHER" id="PTHR23063">
    <property type="entry name" value="PHOSPHOLIPID ACYLTRANSFERASE"/>
    <property type="match status" value="1"/>
</dbReference>
<dbReference type="Pfam" id="PF01553">
    <property type="entry name" value="Acyltransferase"/>
    <property type="match status" value="1"/>
</dbReference>
<dbReference type="SMART" id="SM00563">
    <property type="entry name" value="PlsC"/>
    <property type="match status" value="1"/>
</dbReference>
<dbReference type="SUPFAM" id="SSF69593">
    <property type="entry name" value="Glycerol-3-phosphate (1)-acyltransferase"/>
    <property type="match status" value="1"/>
</dbReference>
<sequence>MSSTAGRLVTSKSELDLDHPNIEDYLPSGSSINEPRGKLSLRDLLDISPTLTEAAGAIVDDSFTRCFKSNPPEPWNWNIYLFPLYCFGVVVRYCILFPLRCFTLAFGWIIFLSLFIPVNALLKGQDRLRKKIERVLVEMICSFFVASWTGVVKYHGPRPSIRPKQVYVANHTSMIDFIVLEQMTAFAVIMQKHPGWVGLLQSTILESVGCIWFNRSEAKDREIVAKKLRDHVQGADSNPLLIFPEGTCVNNNYTVMFKKGAFELDCTVCPIAIKYNKIFVDAFWNSRKQSFTMHLLQLMTSWAVVCEVWYLEPQTIRPGETGIEFAERVRDMISLRAGLKKVPWDGYLKYSRPSPKHSERKQQSFAESILARLEEK</sequence>
<name>GPAT9_ARATH</name>
<comment type="function">
    <text evidence="5 6">Essential protein. Required for male and female gametophytes development (PubMed:26586834). Exhibits sn-1 acyltransferase activity with high specificity for acyl-coenzyme A, thus triggering storage lipid biosynthesis and playing an important role in the Kennedy pathway of glycerolipid biosynthesis (PubMed:27325892). Catalyzes triacylglycerol (TAG) accumulation involved in membrane lipid and oil biosynthesis, especially in seeds (PubMed:26586834, PubMed:27325892). Also contributes to the biosynthesis of both polar lipids and TAG in developing leaves, as well as lipid droplet production in developing pollen grains. Seems to not contribute to surface lipid biosynthesis (e.g. waxes and cutin) (PubMed:27325892).</text>
</comment>
<comment type="catalytic activity">
    <reaction evidence="5 6">
        <text>sn-glycerol 3-phosphate + an acyl-CoA = a 1-acyl-sn-glycero-3-phosphate + CoA</text>
        <dbReference type="Rhea" id="RHEA:15325"/>
        <dbReference type="ChEBI" id="CHEBI:57287"/>
        <dbReference type="ChEBI" id="CHEBI:57597"/>
        <dbReference type="ChEBI" id="CHEBI:57970"/>
        <dbReference type="ChEBI" id="CHEBI:58342"/>
        <dbReference type="EC" id="2.3.1.15"/>
    </reaction>
</comment>
<comment type="pathway">
    <text evidence="5 6">Glycerolipid metabolism; triacylglycerol biosynthesis.</text>
</comment>
<comment type="subunit">
    <text evidence="5">Self-interacts. Interacts with LPAT2 and LPCAT2.</text>
</comment>
<comment type="subcellular location">
    <subcellularLocation>
        <location evidence="4">Endoplasmic reticulum membrane</location>
        <topology evidence="4">Multi-pass membrane protein</topology>
    </subcellularLocation>
</comment>
<comment type="tissue specificity">
    <text evidence="4 6">Up-regulated during embryogenesis (PubMed:19539490, PubMed:27325892). Expressed in seedlings, leaves, stems, roots, floral buds, flowers, pollen, and siliques at various developmental stages (PubMed:27325892).</text>
</comment>
<comment type="developmental stage">
    <text evidence="6">Within siliques, accumulates strongly in developing embryos in the mid-stages of embryo development, during the time of abundant glycerolipid biosynthesis. In stems, confined to phloem and xylem. In flowers, mostly restricted to anthers (and more specifically pollen), and barely in sepals and petals.</text>
</comment>
<comment type="domain">
    <text evidence="2">The HXXXXD motif is essential for acyltransferase activity and may constitute the binding site for the phosphate moiety of the glycerol-3-phosphate.</text>
</comment>
<comment type="disruption phenotype">
    <text evidence="5">Homozygous lethal. Male (pollen) and female gametophytic lethality. Reduces oil content and altered fatty acids (FA) composition.</text>
</comment>
<comment type="similarity">
    <text evidence="8">Belongs to the 1-acyl-sn-glycerol-3-phosphate acyltransferase family.</text>
</comment>
<comment type="sequence caution" evidence="8">
    <conflict type="erroneous gene model prediction">
        <sequence resource="EMBL-CDS" id="BAB09835"/>
    </conflict>
</comment>
<evidence type="ECO:0000250" key="1">
    <source>
        <dbReference type="UniProtKB" id="Q4V8J4"/>
    </source>
</evidence>
<evidence type="ECO:0000250" key="2">
    <source>
        <dbReference type="UniProtKB" id="Q9D517"/>
    </source>
</evidence>
<evidence type="ECO:0000255" key="3"/>
<evidence type="ECO:0000269" key="4">
    <source>
    </source>
</evidence>
<evidence type="ECO:0000269" key="5">
    <source>
    </source>
</evidence>
<evidence type="ECO:0000269" key="6">
    <source>
    </source>
</evidence>
<evidence type="ECO:0000303" key="7">
    <source>
    </source>
</evidence>
<evidence type="ECO:0000305" key="8"/>
<evidence type="ECO:0000305" key="9">
    <source>
    </source>
</evidence>
<evidence type="ECO:0000305" key="10">
    <source>
    </source>
</evidence>
<evidence type="ECO:0000312" key="11">
    <source>
        <dbReference type="Araport" id="AT5G60620"/>
    </source>
</evidence>
<evidence type="ECO:0000312" key="12">
    <source>
        <dbReference type="EMBL" id="BAB09835.1"/>
    </source>
</evidence>
<evidence type="ECO:0007744" key="13">
    <source>
    </source>
</evidence>
<protein>
    <recommendedName>
        <fullName evidence="7">Glycerol-3-phosphate acyltransferase 9</fullName>
        <shortName evidence="7">AtGPAT9</shortName>
        <ecNumber evidence="5 6">2.3.1.15</ecNumber>
    </recommendedName>
</protein>
<organism>
    <name type="scientific">Arabidopsis thaliana</name>
    <name type="common">Mouse-ear cress</name>
    <dbReference type="NCBI Taxonomy" id="3702"/>
    <lineage>
        <taxon>Eukaryota</taxon>
        <taxon>Viridiplantae</taxon>
        <taxon>Streptophyta</taxon>
        <taxon>Embryophyta</taxon>
        <taxon>Tracheophyta</taxon>
        <taxon>Spermatophyta</taxon>
        <taxon>Magnoliopsida</taxon>
        <taxon>eudicotyledons</taxon>
        <taxon>Gunneridae</taxon>
        <taxon>Pentapetalae</taxon>
        <taxon>rosids</taxon>
        <taxon>malvids</taxon>
        <taxon>Brassicales</taxon>
        <taxon>Brassicaceae</taxon>
        <taxon>Camelineae</taxon>
        <taxon>Arabidopsis</taxon>
    </lineage>
</organism>